<organism>
    <name type="scientific">Gibberella zeae (strain ATCC MYA-4620 / CBS 123657 / FGSC 9075 / NRRL 31084 / PH-1)</name>
    <name type="common">Wheat head blight fungus</name>
    <name type="synonym">Fusarium graminearum</name>
    <dbReference type="NCBI Taxonomy" id="229533"/>
    <lineage>
        <taxon>Eukaryota</taxon>
        <taxon>Fungi</taxon>
        <taxon>Dikarya</taxon>
        <taxon>Ascomycota</taxon>
        <taxon>Pezizomycotina</taxon>
        <taxon>Sordariomycetes</taxon>
        <taxon>Hypocreomycetidae</taxon>
        <taxon>Hypocreales</taxon>
        <taxon>Nectriaceae</taxon>
        <taxon>Fusarium</taxon>
    </lineage>
</organism>
<evidence type="ECO:0000255" key="1">
    <source>
        <dbReference type="PROSITE-ProRule" id="PRU01185"/>
    </source>
</evidence>
<evidence type="ECO:0000305" key="2"/>
<gene>
    <name type="primary">CSN12</name>
    <name type="ORF">FGRRES_01519</name>
    <name type="ORF">FGSG_01519</name>
</gene>
<feature type="chain" id="PRO_0000121041" description="Protein CSN12 homolog">
    <location>
        <begin position="1"/>
        <end position="455"/>
    </location>
</feature>
<feature type="domain" description="PCI" evidence="1">
    <location>
        <begin position="252"/>
        <end position="449"/>
    </location>
</feature>
<proteinExistence type="inferred from homology"/>
<accession>Q4IMN9</accession>
<accession>A0A0E0RQY8</accession>
<accession>I1RD32</accession>
<accession>V6QWX0</accession>
<dbReference type="EMBL" id="DS231663">
    <property type="protein sequence ID" value="ESU06843.1"/>
    <property type="molecule type" value="Genomic_DNA"/>
</dbReference>
<dbReference type="EMBL" id="HG970332">
    <property type="protein sequence ID" value="CEF73663.1"/>
    <property type="molecule type" value="Genomic_DNA"/>
</dbReference>
<dbReference type="RefSeq" id="XP_011317328.1">
    <property type="nucleotide sequence ID" value="XM_011319026.1"/>
</dbReference>
<dbReference type="SMR" id="Q4IMN9"/>
<dbReference type="FunCoup" id="Q4IMN9">
    <property type="interactions" value="914"/>
</dbReference>
<dbReference type="STRING" id="229533.Q4IMN9"/>
<dbReference type="GeneID" id="23548954"/>
<dbReference type="KEGG" id="fgr:FGSG_01519"/>
<dbReference type="VEuPathDB" id="FungiDB:FGRAMPH1_01G03715"/>
<dbReference type="eggNOG" id="KOG2688">
    <property type="taxonomic scope" value="Eukaryota"/>
</dbReference>
<dbReference type="HOGENOM" id="CLU_031567_1_0_1"/>
<dbReference type="InParanoid" id="Q4IMN9"/>
<dbReference type="OrthoDB" id="72872at110618"/>
<dbReference type="Proteomes" id="UP000070720">
    <property type="component" value="Chromosome 1"/>
</dbReference>
<dbReference type="GO" id="GO:0003690">
    <property type="term" value="F:double-stranded DNA binding"/>
    <property type="evidence" value="ECO:0007669"/>
    <property type="project" value="InterPro"/>
</dbReference>
<dbReference type="GO" id="GO:0003723">
    <property type="term" value="F:RNA binding"/>
    <property type="evidence" value="ECO:0007669"/>
    <property type="project" value="InterPro"/>
</dbReference>
<dbReference type="FunFam" id="1.10.10.10:FF:000366">
    <property type="entry name" value="COP9 signalosome complex subunit"/>
    <property type="match status" value="1"/>
</dbReference>
<dbReference type="Gene3D" id="1.10.10.10">
    <property type="entry name" value="Winged helix-like DNA-binding domain superfamily/Winged helix DNA-binding domain"/>
    <property type="match status" value="1"/>
</dbReference>
<dbReference type="InterPro" id="IPR045114">
    <property type="entry name" value="Csn12-like"/>
</dbReference>
<dbReference type="InterPro" id="IPR000717">
    <property type="entry name" value="PCI_dom"/>
</dbReference>
<dbReference type="InterPro" id="IPR036388">
    <property type="entry name" value="WH-like_DNA-bd_sf"/>
</dbReference>
<dbReference type="PANTHER" id="PTHR12732:SF0">
    <property type="entry name" value="PCI DOMAIN-CONTAINING PROTEIN 2"/>
    <property type="match status" value="1"/>
</dbReference>
<dbReference type="PANTHER" id="PTHR12732">
    <property type="entry name" value="UNCHARACTERIZED PROTEASOME COMPONENT REGION PCI-CONTAINING"/>
    <property type="match status" value="1"/>
</dbReference>
<dbReference type="Pfam" id="PF01399">
    <property type="entry name" value="PCI"/>
    <property type="match status" value="1"/>
</dbReference>
<dbReference type="SMART" id="SM00753">
    <property type="entry name" value="PAM"/>
    <property type="match status" value="1"/>
</dbReference>
<dbReference type="PROSITE" id="PS50250">
    <property type="entry name" value="PCI"/>
    <property type="match status" value="1"/>
</dbReference>
<name>CSN12_GIBZE</name>
<protein>
    <recommendedName>
        <fullName>Protein CSN12 homolog</fullName>
    </recommendedName>
</protein>
<comment type="similarity">
    <text evidence="2">Belongs to the CSN12 family.</text>
</comment>
<reference key="1">
    <citation type="journal article" date="2007" name="Science">
        <title>The Fusarium graminearum genome reveals a link between localized polymorphism and pathogen specialization.</title>
        <authorList>
            <person name="Cuomo C.A."/>
            <person name="Gueldener U."/>
            <person name="Xu J.-R."/>
            <person name="Trail F."/>
            <person name="Turgeon B.G."/>
            <person name="Di Pietro A."/>
            <person name="Walton J.D."/>
            <person name="Ma L.-J."/>
            <person name="Baker S.E."/>
            <person name="Rep M."/>
            <person name="Adam G."/>
            <person name="Antoniw J."/>
            <person name="Baldwin T."/>
            <person name="Calvo S.E."/>
            <person name="Chang Y.-L."/>
            <person name="DeCaprio D."/>
            <person name="Gale L.R."/>
            <person name="Gnerre S."/>
            <person name="Goswami R.S."/>
            <person name="Hammond-Kosack K."/>
            <person name="Harris L.J."/>
            <person name="Hilburn K."/>
            <person name="Kennell J.C."/>
            <person name="Kroken S."/>
            <person name="Magnuson J.K."/>
            <person name="Mannhaupt G."/>
            <person name="Mauceli E.W."/>
            <person name="Mewes H.-W."/>
            <person name="Mitterbauer R."/>
            <person name="Muehlbauer G."/>
            <person name="Muensterkoetter M."/>
            <person name="Nelson D."/>
            <person name="O'Donnell K."/>
            <person name="Ouellet T."/>
            <person name="Qi W."/>
            <person name="Quesneville H."/>
            <person name="Roncero M.I.G."/>
            <person name="Seong K.-Y."/>
            <person name="Tetko I.V."/>
            <person name="Urban M."/>
            <person name="Waalwijk C."/>
            <person name="Ward T.J."/>
            <person name="Yao J."/>
            <person name="Birren B.W."/>
            <person name="Kistler H.C."/>
        </authorList>
    </citation>
    <scope>NUCLEOTIDE SEQUENCE [LARGE SCALE GENOMIC DNA]</scope>
    <source>
        <strain>ATCC MYA-4620 / CBS 123657 / FGSC 9075 / NRRL 31084 / PH-1</strain>
    </source>
</reference>
<reference key="2">
    <citation type="journal article" date="2010" name="Nature">
        <title>Comparative genomics reveals mobile pathogenicity chromosomes in Fusarium.</title>
        <authorList>
            <person name="Ma L.-J."/>
            <person name="van der Does H.C."/>
            <person name="Borkovich K.A."/>
            <person name="Coleman J.J."/>
            <person name="Daboussi M.-J."/>
            <person name="Di Pietro A."/>
            <person name="Dufresne M."/>
            <person name="Freitag M."/>
            <person name="Grabherr M."/>
            <person name="Henrissat B."/>
            <person name="Houterman P.M."/>
            <person name="Kang S."/>
            <person name="Shim W.-B."/>
            <person name="Woloshuk C."/>
            <person name="Xie X."/>
            <person name="Xu J.-R."/>
            <person name="Antoniw J."/>
            <person name="Baker S.E."/>
            <person name="Bluhm B.H."/>
            <person name="Breakspear A."/>
            <person name="Brown D.W."/>
            <person name="Butchko R.A.E."/>
            <person name="Chapman S."/>
            <person name="Coulson R."/>
            <person name="Coutinho P.M."/>
            <person name="Danchin E.G.J."/>
            <person name="Diener A."/>
            <person name="Gale L.R."/>
            <person name="Gardiner D.M."/>
            <person name="Goff S."/>
            <person name="Hammond-Kosack K.E."/>
            <person name="Hilburn K."/>
            <person name="Hua-Van A."/>
            <person name="Jonkers W."/>
            <person name="Kazan K."/>
            <person name="Kodira C.D."/>
            <person name="Koehrsen M."/>
            <person name="Kumar L."/>
            <person name="Lee Y.-H."/>
            <person name="Li L."/>
            <person name="Manners J.M."/>
            <person name="Miranda-Saavedra D."/>
            <person name="Mukherjee M."/>
            <person name="Park G."/>
            <person name="Park J."/>
            <person name="Park S.-Y."/>
            <person name="Proctor R.H."/>
            <person name="Regev A."/>
            <person name="Ruiz-Roldan M.C."/>
            <person name="Sain D."/>
            <person name="Sakthikumar S."/>
            <person name="Sykes S."/>
            <person name="Schwartz D.C."/>
            <person name="Turgeon B.G."/>
            <person name="Wapinski I."/>
            <person name="Yoder O."/>
            <person name="Young S."/>
            <person name="Zeng Q."/>
            <person name="Zhou S."/>
            <person name="Galagan J."/>
            <person name="Cuomo C.A."/>
            <person name="Kistler H.C."/>
            <person name="Rep M."/>
        </authorList>
    </citation>
    <scope>GENOME REANNOTATION</scope>
    <source>
        <strain>ATCC MYA-4620 / CBS 123657 / FGSC 9075 / NRRL 31084 / PH-1</strain>
    </source>
</reference>
<reference key="3">
    <citation type="journal article" date="2015" name="BMC Genomics">
        <title>The completed genome sequence of the pathogenic ascomycete fungus Fusarium graminearum.</title>
        <authorList>
            <person name="King R."/>
            <person name="Urban M."/>
            <person name="Hammond-Kosack M.C.U."/>
            <person name="Hassani-Pak K."/>
            <person name="Hammond-Kosack K.E."/>
        </authorList>
    </citation>
    <scope>NUCLEOTIDE SEQUENCE [LARGE SCALE GENOMIC DNA]</scope>
    <source>
        <strain>ATCC MYA-4620 / CBS 123657 / FGSC 9075 / NRRL 31084 / PH-1</strain>
    </source>
</reference>
<keyword id="KW-1185">Reference proteome</keyword>
<sequence>MNTTFQQFAEAHSLRNGYKLAQTLSPVPPADDPQRLMAVWRSTNSHSVKGDIKHFIKSSTAHKRKLDHDETTGWVEVYTSYWKAVSEILAGESGKSSWTKVYEAWKELTSVLIRGYNSHGFEAWTIPSLYMVGKYLRLFAIKSDEERRAKAFDTGPGASLISDDFDPETDKQLQLRDCEGHLKRIFSLCLNDRAPLEESRKWGIYFVINLLFKTYFKLNSASLSRTILKTLAVYNDKGDMPPLEMFPKSQRVTFKFYEGVLLFLEENYIKAESHLNEAWQLCHKDAYPQSERILTYLIPCRLLTSHVLPTKALLENYPRLQDLFLPLATCIKTGNLQAFDQALQRGEAEFVKRRIYLTLERGRDIALRNLLRKVFIAGGFDEAKEADAAPVRRTRIPVAEFQAAISMGSGHLVDPDEVECMLANMIYKDLMKGYIARERGIVVLSKKGAFPGTGL</sequence>